<organism>
    <name type="scientific">Bordetella petrii (strain ATCC BAA-461 / DSM 12804 / CCUG 43448)</name>
    <dbReference type="NCBI Taxonomy" id="340100"/>
    <lineage>
        <taxon>Bacteria</taxon>
        <taxon>Pseudomonadati</taxon>
        <taxon>Pseudomonadota</taxon>
        <taxon>Betaproteobacteria</taxon>
        <taxon>Burkholderiales</taxon>
        <taxon>Alcaligenaceae</taxon>
        <taxon>Bordetella</taxon>
    </lineage>
</organism>
<keyword id="KW-0028">Amino-acid biosynthesis</keyword>
<keyword id="KW-0963">Cytoplasm</keyword>
<keyword id="KW-0368">Histidine biosynthesis</keyword>
<accession>A9IK79</accession>
<name>HISZ_BORPD</name>
<dbReference type="EMBL" id="AM902716">
    <property type="protein sequence ID" value="CAP42370.1"/>
    <property type="molecule type" value="Genomic_DNA"/>
</dbReference>
<dbReference type="SMR" id="A9IK79"/>
<dbReference type="STRING" id="94624.Bpet2030"/>
<dbReference type="KEGG" id="bpt:Bpet2030"/>
<dbReference type="eggNOG" id="COG3705">
    <property type="taxonomic scope" value="Bacteria"/>
</dbReference>
<dbReference type="UniPathway" id="UPA00031">
    <property type="reaction ID" value="UER00006"/>
</dbReference>
<dbReference type="Proteomes" id="UP000001225">
    <property type="component" value="Chromosome"/>
</dbReference>
<dbReference type="GO" id="GO:0005737">
    <property type="term" value="C:cytoplasm"/>
    <property type="evidence" value="ECO:0007669"/>
    <property type="project" value="UniProtKB-SubCell"/>
</dbReference>
<dbReference type="GO" id="GO:0004821">
    <property type="term" value="F:histidine-tRNA ligase activity"/>
    <property type="evidence" value="ECO:0007669"/>
    <property type="project" value="TreeGrafter"/>
</dbReference>
<dbReference type="GO" id="GO:0006427">
    <property type="term" value="P:histidyl-tRNA aminoacylation"/>
    <property type="evidence" value="ECO:0007669"/>
    <property type="project" value="TreeGrafter"/>
</dbReference>
<dbReference type="GO" id="GO:0000105">
    <property type="term" value="P:L-histidine biosynthetic process"/>
    <property type="evidence" value="ECO:0007669"/>
    <property type="project" value="UniProtKB-UniRule"/>
</dbReference>
<dbReference type="Gene3D" id="3.30.930.10">
    <property type="entry name" value="Bira Bifunctional Protein, Domain 2"/>
    <property type="match status" value="1"/>
</dbReference>
<dbReference type="HAMAP" id="MF_00125">
    <property type="entry name" value="HisZ"/>
    <property type="match status" value="1"/>
</dbReference>
<dbReference type="InterPro" id="IPR045864">
    <property type="entry name" value="aa-tRNA-synth_II/BPL/LPL"/>
</dbReference>
<dbReference type="InterPro" id="IPR041715">
    <property type="entry name" value="HisRS-like_core"/>
</dbReference>
<dbReference type="InterPro" id="IPR004516">
    <property type="entry name" value="HisRS/HisZ"/>
</dbReference>
<dbReference type="InterPro" id="IPR004517">
    <property type="entry name" value="HisZ"/>
</dbReference>
<dbReference type="NCBIfam" id="NF008935">
    <property type="entry name" value="PRK12292.1-1"/>
    <property type="match status" value="1"/>
</dbReference>
<dbReference type="NCBIfam" id="NF009086">
    <property type="entry name" value="PRK12421.1"/>
    <property type="match status" value="1"/>
</dbReference>
<dbReference type="PANTHER" id="PTHR43707:SF1">
    <property type="entry name" value="HISTIDINE--TRNA LIGASE, MITOCHONDRIAL-RELATED"/>
    <property type="match status" value="1"/>
</dbReference>
<dbReference type="PANTHER" id="PTHR43707">
    <property type="entry name" value="HISTIDYL-TRNA SYNTHETASE"/>
    <property type="match status" value="1"/>
</dbReference>
<dbReference type="Pfam" id="PF13393">
    <property type="entry name" value="tRNA-synt_His"/>
    <property type="match status" value="1"/>
</dbReference>
<dbReference type="PIRSF" id="PIRSF001549">
    <property type="entry name" value="His-tRNA_synth"/>
    <property type="match status" value="1"/>
</dbReference>
<dbReference type="SUPFAM" id="SSF55681">
    <property type="entry name" value="Class II aaRS and biotin synthetases"/>
    <property type="match status" value="1"/>
</dbReference>
<comment type="function">
    <text evidence="1">Required for the first step of histidine biosynthesis. May allow the feedback regulation of ATP phosphoribosyltransferase activity by histidine.</text>
</comment>
<comment type="pathway">
    <text evidence="1">Amino-acid biosynthesis; L-histidine biosynthesis; L-histidine from 5-phospho-alpha-D-ribose 1-diphosphate: step 1/9.</text>
</comment>
<comment type="subunit">
    <text evidence="1">Heteromultimer composed of HisG and HisZ subunits.</text>
</comment>
<comment type="subcellular location">
    <subcellularLocation>
        <location evidence="1">Cytoplasm</location>
    </subcellularLocation>
</comment>
<comment type="miscellaneous">
    <text>This function is generally fulfilled by the C-terminal part of HisG, which is missing in some bacteria such as this one.</text>
</comment>
<comment type="similarity">
    <text evidence="1">Belongs to the class-II aminoacyl-tRNA synthetase family. HisZ subfamily.</text>
</comment>
<feature type="chain" id="PRO_1000095445" description="ATP phosphoribosyltransferase regulatory subunit">
    <location>
        <begin position="1"/>
        <end position="385"/>
    </location>
</feature>
<protein>
    <recommendedName>
        <fullName evidence="1">ATP phosphoribosyltransferase regulatory subunit</fullName>
    </recommendedName>
</protein>
<evidence type="ECO:0000255" key="1">
    <source>
        <dbReference type="HAMAP-Rule" id="MF_00125"/>
    </source>
</evidence>
<gene>
    <name evidence="1" type="primary">hisZ</name>
    <name type="ordered locus">Bpet2030</name>
</gene>
<sequence>MGNWLLPESLADVLPAEARRIEELRRELLDLYRTYGFELVAPPLVEYIDSLLSGTGTDLNLRTCKLVDQLSGRTLGVRADMTPQVTRIDAHLLNRAGVTRLCYCGTVLHARPADLLSSRELLQIGAEIYGHAGFEADLEILSLVLDTVAAAGLRQPRLDLCHPGVVRAILDADPAAAAYAEDIVLLLREKDVPGLAELARRDGGIRADTAAALQRLPGLYGGPDVLQQARHDLPLLPGVAAALDALQAIIDAMPDVTLGVDLADIGGYGYHSGVTFALYAEGWHDALVSGGRYDDVSRAFGRARPATGFSLDLRKLARGLPPAGRARAVRAPWGQDAALAAAVRQLRRAGEIVVQALPGHQQSQDEFICDRELVLQDGAWTLRTL</sequence>
<reference key="1">
    <citation type="journal article" date="2008" name="BMC Genomics">
        <title>The missing link: Bordetella petrii is endowed with both the metabolic versatility of environmental bacteria and virulence traits of pathogenic Bordetellae.</title>
        <authorList>
            <person name="Gross R."/>
            <person name="Guzman C.A."/>
            <person name="Sebaihia M."/>
            <person name="Martin dos Santos V.A.P."/>
            <person name="Pieper D.H."/>
            <person name="Koebnik R."/>
            <person name="Lechner M."/>
            <person name="Bartels D."/>
            <person name="Buhrmester J."/>
            <person name="Choudhuri J.V."/>
            <person name="Ebensen T."/>
            <person name="Gaigalat L."/>
            <person name="Herrmann S."/>
            <person name="Khachane A.N."/>
            <person name="Larisch C."/>
            <person name="Link S."/>
            <person name="Linke B."/>
            <person name="Meyer F."/>
            <person name="Mormann S."/>
            <person name="Nakunst D."/>
            <person name="Rueckert C."/>
            <person name="Schneiker-Bekel S."/>
            <person name="Schulze K."/>
            <person name="Voerholter F.-J."/>
            <person name="Yevsa T."/>
            <person name="Engle J.T."/>
            <person name="Goldman W.E."/>
            <person name="Puehler A."/>
            <person name="Goebel U.B."/>
            <person name="Goesmann A."/>
            <person name="Bloecker H."/>
            <person name="Kaiser O."/>
            <person name="Martinez-Arias R."/>
        </authorList>
    </citation>
    <scope>NUCLEOTIDE SEQUENCE [LARGE SCALE GENOMIC DNA]</scope>
    <source>
        <strain>ATCC BAA-461 / DSM 12804 / CCUG 43448</strain>
    </source>
</reference>
<proteinExistence type="inferred from homology"/>